<organism>
    <name type="scientific">Borrelia duttonii (strain Ly)</name>
    <dbReference type="NCBI Taxonomy" id="412419"/>
    <lineage>
        <taxon>Bacteria</taxon>
        <taxon>Pseudomonadati</taxon>
        <taxon>Spirochaetota</taxon>
        <taxon>Spirochaetia</taxon>
        <taxon>Spirochaetales</taxon>
        <taxon>Borreliaceae</taxon>
        <taxon>Borrelia</taxon>
    </lineage>
</organism>
<name>GATB_BORDL</name>
<gene>
    <name evidence="1" type="primary">gatB</name>
    <name type="ordered locus">BDU_340</name>
</gene>
<protein>
    <recommendedName>
        <fullName evidence="1">Aspartyl/glutamyl-tRNA(Asn/Gln) amidotransferase subunit B</fullName>
        <shortName evidence="1">Asp/Glu-ADT subunit B</shortName>
        <ecNumber evidence="1">6.3.5.-</ecNumber>
    </recommendedName>
</protein>
<comment type="function">
    <text evidence="1">Allows the formation of correctly charged Asn-tRNA(Asn) or Gln-tRNA(Gln) through the transamidation of misacylated Asp-tRNA(Asn) or Glu-tRNA(Gln) in organisms which lack either or both of asparaginyl-tRNA or glutaminyl-tRNA synthetases. The reaction takes place in the presence of glutamine and ATP through an activated phospho-Asp-tRNA(Asn) or phospho-Glu-tRNA(Gln).</text>
</comment>
<comment type="catalytic activity">
    <reaction evidence="1">
        <text>L-glutamyl-tRNA(Gln) + L-glutamine + ATP + H2O = L-glutaminyl-tRNA(Gln) + L-glutamate + ADP + phosphate + H(+)</text>
        <dbReference type="Rhea" id="RHEA:17521"/>
        <dbReference type="Rhea" id="RHEA-COMP:9681"/>
        <dbReference type="Rhea" id="RHEA-COMP:9684"/>
        <dbReference type="ChEBI" id="CHEBI:15377"/>
        <dbReference type="ChEBI" id="CHEBI:15378"/>
        <dbReference type="ChEBI" id="CHEBI:29985"/>
        <dbReference type="ChEBI" id="CHEBI:30616"/>
        <dbReference type="ChEBI" id="CHEBI:43474"/>
        <dbReference type="ChEBI" id="CHEBI:58359"/>
        <dbReference type="ChEBI" id="CHEBI:78520"/>
        <dbReference type="ChEBI" id="CHEBI:78521"/>
        <dbReference type="ChEBI" id="CHEBI:456216"/>
    </reaction>
</comment>
<comment type="catalytic activity">
    <reaction evidence="1">
        <text>L-aspartyl-tRNA(Asn) + L-glutamine + ATP + H2O = L-asparaginyl-tRNA(Asn) + L-glutamate + ADP + phosphate + 2 H(+)</text>
        <dbReference type="Rhea" id="RHEA:14513"/>
        <dbReference type="Rhea" id="RHEA-COMP:9674"/>
        <dbReference type="Rhea" id="RHEA-COMP:9677"/>
        <dbReference type="ChEBI" id="CHEBI:15377"/>
        <dbReference type="ChEBI" id="CHEBI:15378"/>
        <dbReference type="ChEBI" id="CHEBI:29985"/>
        <dbReference type="ChEBI" id="CHEBI:30616"/>
        <dbReference type="ChEBI" id="CHEBI:43474"/>
        <dbReference type="ChEBI" id="CHEBI:58359"/>
        <dbReference type="ChEBI" id="CHEBI:78515"/>
        <dbReference type="ChEBI" id="CHEBI:78516"/>
        <dbReference type="ChEBI" id="CHEBI:456216"/>
    </reaction>
</comment>
<comment type="subunit">
    <text evidence="1">Heterotrimer of A, B and C subunits.</text>
</comment>
<comment type="similarity">
    <text evidence="1">Belongs to the GatB/GatE family. GatB subfamily.</text>
</comment>
<keyword id="KW-0067">ATP-binding</keyword>
<keyword id="KW-0436">Ligase</keyword>
<keyword id="KW-0547">Nucleotide-binding</keyword>
<keyword id="KW-0648">Protein biosynthesis</keyword>
<dbReference type="EC" id="6.3.5.-" evidence="1"/>
<dbReference type="EMBL" id="CP000976">
    <property type="protein sequence ID" value="ACH93292.1"/>
    <property type="molecule type" value="Genomic_DNA"/>
</dbReference>
<dbReference type="RefSeq" id="WP_012538103.1">
    <property type="nucleotide sequence ID" value="NC_011229.1"/>
</dbReference>
<dbReference type="SMR" id="B5RLS6"/>
<dbReference type="STRING" id="412419.BDU_340"/>
<dbReference type="KEGG" id="bdu:BDU_340"/>
<dbReference type="eggNOG" id="COG0064">
    <property type="taxonomic scope" value="Bacteria"/>
</dbReference>
<dbReference type="HOGENOM" id="CLU_019240_0_0_12"/>
<dbReference type="OrthoDB" id="9804078at2"/>
<dbReference type="Proteomes" id="UP000000611">
    <property type="component" value="Chromosome"/>
</dbReference>
<dbReference type="GO" id="GO:0050566">
    <property type="term" value="F:asparaginyl-tRNA synthase (glutamine-hydrolyzing) activity"/>
    <property type="evidence" value="ECO:0007669"/>
    <property type="project" value="RHEA"/>
</dbReference>
<dbReference type="GO" id="GO:0005524">
    <property type="term" value="F:ATP binding"/>
    <property type="evidence" value="ECO:0007669"/>
    <property type="project" value="UniProtKB-KW"/>
</dbReference>
<dbReference type="GO" id="GO:0050567">
    <property type="term" value="F:glutaminyl-tRNA synthase (glutamine-hydrolyzing) activity"/>
    <property type="evidence" value="ECO:0007669"/>
    <property type="project" value="UniProtKB-UniRule"/>
</dbReference>
<dbReference type="GO" id="GO:0070681">
    <property type="term" value="P:glutaminyl-tRNAGln biosynthesis via transamidation"/>
    <property type="evidence" value="ECO:0007669"/>
    <property type="project" value="TreeGrafter"/>
</dbReference>
<dbReference type="GO" id="GO:0006412">
    <property type="term" value="P:translation"/>
    <property type="evidence" value="ECO:0007669"/>
    <property type="project" value="UniProtKB-UniRule"/>
</dbReference>
<dbReference type="FunFam" id="1.10.10.410:FF:000001">
    <property type="entry name" value="Aspartyl/glutamyl-tRNA(Asn/Gln) amidotransferase subunit B"/>
    <property type="match status" value="1"/>
</dbReference>
<dbReference type="Gene3D" id="1.10.10.410">
    <property type="match status" value="1"/>
</dbReference>
<dbReference type="HAMAP" id="MF_00121">
    <property type="entry name" value="GatB"/>
    <property type="match status" value="1"/>
</dbReference>
<dbReference type="InterPro" id="IPR017959">
    <property type="entry name" value="Asn/Gln-tRNA_amidoTrfase_suB/E"/>
</dbReference>
<dbReference type="InterPro" id="IPR006075">
    <property type="entry name" value="Asn/Gln-tRNA_Trfase_suB/E_cat"/>
</dbReference>
<dbReference type="InterPro" id="IPR018027">
    <property type="entry name" value="Asn/Gln_amidotransferase"/>
</dbReference>
<dbReference type="InterPro" id="IPR003789">
    <property type="entry name" value="Asn/Gln_tRNA_amidoTrase-B-like"/>
</dbReference>
<dbReference type="InterPro" id="IPR004413">
    <property type="entry name" value="GatB"/>
</dbReference>
<dbReference type="InterPro" id="IPR023168">
    <property type="entry name" value="GatB_Yqey_C_2"/>
</dbReference>
<dbReference type="InterPro" id="IPR017958">
    <property type="entry name" value="Gln-tRNA_amidoTrfase_suB_CS"/>
</dbReference>
<dbReference type="InterPro" id="IPR014746">
    <property type="entry name" value="Gln_synth/guanido_kin_cat_dom"/>
</dbReference>
<dbReference type="NCBIfam" id="TIGR00133">
    <property type="entry name" value="gatB"/>
    <property type="match status" value="1"/>
</dbReference>
<dbReference type="NCBIfam" id="NF004012">
    <property type="entry name" value="PRK05477.1-2"/>
    <property type="match status" value="1"/>
</dbReference>
<dbReference type="NCBIfam" id="NF004014">
    <property type="entry name" value="PRK05477.1-4"/>
    <property type="match status" value="1"/>
</dbReference>
<dbReference type="PANTHER" id="PTHR11659">
    <property type="entry name" value="GLUTAMYL-TRNA GLN AMIDOTRANSFERASE SUBUNIT B MITOCHONDRIAL AND PROKARYOTIC PET112-RELATED"/>
    <property type="match status" value="1"/>
</dbReference>
<dbReference type="PANTHER" id="PTHR11659:SF0">
    <property type="entry name" value="GLUTAMYL-TRNA(GLN) AMIDOTRANSFERASE SUBUNIT B, MITOCHONDRIAL"/>
    <property type="match status" value="1"/>
</dbReference>
<dbReference type="Pfam" id="PF02934">
    <property type="entry name" value="GatB_N"/>
    <property type="match status" value="1"/>
</dbReference>
<dbReference type="Pfam" id="PF02637">
    <property type="entry name" value="GatB_Yqey"/>
    <property type="match status" value="1"/>
</dbReference>
<dbReference type="SMART" id="SM00845">
    <property type="entry name" value="GatB_Yqey"/>
    <property type="match status" value="1"/>
</dbReference>
<dbReference type="SUPFAM" id="SSF89095">
    <property type="entry name" value="GatB/YqeY motif"/>
    <property type="match status" value="1"/>
</dbReference>
<dbReference type="SUPFAM" id="SSF55931">
    <property type="entry name" value="Glutamine synthetase/guanido kinase"/>
    <property type="match status" value="1"/>
</dbReference>
<dbReference type="PROSITE" id="PS01234">
    <property type="entry name" value="GATB"/>
    <property type="match status" value="1"/>
</dbReference>
<reference key="1">
    <citation type="journal article" date="2008" name="PLoS Genet.">
        <title>The genome of Borrelia recurrentis, the agent of deadly louse-borne relapsing fever, is a degraded subset of tick-borne Borrelia duttonii.</title>
        <authorList>
            <person name="Lescot M."/>
            <person name="Audic S."/>
            <person name="Robert C."/>
            <person name="Nguyen T.T."/>
            <person name="Blanc G."/>
            <person name="Cutler S.J."/>
            <person name="Wincker P."/>
            <person name="Couloux A."/>
            <person name="Claverie J.-M."/>
            <person name="Raoult D."/>
            <person name="Drancourt M."/>
        </authorList>
    </citation>
    <scope>NUCLEOTIDE SEQUENCE [LARGE SCALE GENOMIC DNA]</scope>
    <source>
        <strain>Ly</strain>
    </source>
</reference>
<sequence>MEYKLLIGLEVHVQLGLKTKAFCGCKNDFGGIPNSRVCPICLGLPGALPSVNKELVSSAILAGHATNSTIRNIVKFDRKHYAYPDLPKGYQISQNDEPICENGFIFIKTSLGVKRINIARIHMEEDSGKSLHLLSNDNQSYIDFNRAGAPLLEIVSQPDIRSGEEAVAYLNALREIFRYLDLSECSMENGSFRCDVNINLLINENDVNYKTPISEIKNLNSFKSVKLAIDYEESKQKEEWILYRKTLESVGKCTMGFDDKKGITVLQRSKETISDYRYIKDPDLPLIKLESDYIENIKSHRMVELPFDARIRLQEQYGLSDFDVVTLTSDKNLVKYFEEAALTSSEPKKVANWILSEVLSVLNEREIGILDFNLPASYIGELVEFILNGKISGKISKEIFLEMVDRNVSSITIINEKKLEQISDKSFIESIVIEVLNENPKSIELYKKGKSHAVKFMMGQIMRKTSGKVNPVLSNEILMNKLQDV</sequence>
<feature type="chain" id="PRO_1000095185" description="Aspartyl/glutamyl-tRNA(Asn/Gln) amidotransferase subunit B">
    <location>
        <begin position="1"/>
        <end position="485"/>
    </location>
</feature>
<proteinExistence type="inferred from homology"/>
<evidence type="ECO:0000255" key="1">
    <source>
        <dbReference type="HAMAP-Rule" id="MF_00121"/>
    </source>
</evidence>
<accession>B5RLS6</accession>